<name>CSEC_STRAW</name>
<sequence length="487" mass="51616">MRGNLRRPGPAGTAGPGRTGIRTSADGGRARPRTGAGTGVRAGVRSGVVGVGAGIRTGVRWKISAAIALVGALVALALSLVVHNAARVSMLDNARDLADERIQVAERMYEAGRAQSFGVKLDDPAIPRDLMMKVTQGRRATYVADGPHGVPDIWAAVPLKDGRVLSLHTRFTDRSADIMKDLDQALIIGSIAVVFGGSALGVLIGGQLSRRLRKAAAAANQVAQGERDVRVRDAIGGVVRDETDDLARAVDAMADALQQRIEAERRVTADIAHELRTPVTGLLTAAELLPPGRPTELVRDRAQAMRTLVEDVLEVARLDGASERAELQDIMLGEFVSRRVAAKDADIEVRVVHESEVTTDPRRLERVLFNLLANAARHGKPPIEVSVEGRVIRVRDHGPGFPEELLADGPRRFRTGSTDRAGHGHGLGLTIAAGQARVLGARLTFRNVRPAGAPGDVPAEGAVAVLWLPEHAPTNTGSFPMLPLSGG</sequence>
<dbReference type="EC" id="2.7.13.3"/>
<dbReference type="EMBL" id="BA000030">
    <property type="protein sequence ID" value="BAC72415.1"/>
    <property type="molecule type" value="Genomic_DNA"/>
</dbReference>
<dbReference type="SMR" id="Q82EB2"/>
<dbReference type="KEGG" id="sma:SAVERM_4703"/>
<dbReference type="eggNOG" id="COG2205">
    <property type="taxonomic scope" value="Bacteria"/>
</dbReference>
<dbReference type="HOGENOM" id="CLU_000445_89_4_11"/>
<dbReference type="OrthoDB" id="9786919at2"/>
<dbReference type="Proteomes" id="UP000000428">
    <property type="component" value="Chromosome"/>
</dbReference>
<dbReference type="GO" id="GO:0005886">
    <property type="term" value="C:plasma membrane"/>
    <property type="evidence" value="ECO:0007669"/>
    <property type="project" value="UniProtKB-SubCell"/>
</dbReference>
<dbReference type="GO" id="GO:0005524">
    <property type="term" value="F:ATP binding"/>
    <property type="evidence" value="ECO:0007669"/>
    <property type="project" value="UniProtKB-KW"/>
</dbReference>
<dbReference type="GO" id="GO:0000155">
    <property type="term" value="F:phosphorelay sensor kinase activity"/>
    <property type="evidence" value="ECO:0007669"/>
    <property type="project" value="InterPro"/>
</dbReference>
<dbReference type="CDD" id="cd00075">
    <property type="entry name" value="HATPase"/>
    <property type="match status" value="1"/>
</dbReference>
<dbReference type="CDD" id="cd00082">
    <property type="entry name" value="HisKA"/>
    <property type="match status" value="1"/>
</dbReference>
<dbReference type="FunFam" id="1.10.287.130:FF:000012">
    <property type="entry name" value="Histidine kinase"/>
    <property type="match status" value="1"/>
</dbReference>
<dbReference type="FunFam" id="3.30.565.10:FF:000089">
    <property type="entry name" value="Histidine kinase"/>
    <property type="match status" value="1"/>
</dbReference>
<dbReference type="Gene3D" id="1.10.287.130">
    <property type="match status" value="1"/>
</dbReference>
<dbReference type="Gene3D" id="6.10.340.10">
    <property type="match status" value="1"/>
</dbReference>
<dbReference type="Gene3D" id="3.30.565.10">
    <property type="entry name" value="Histidine kinase-like ATPase, C-terminal domain"/>
    <property type="match status" value="1"/>
</dbReference>
<dbReference type="InterPro" id="IPR050980">
    <property type="entry name" value="2C_sensor_his_kinase"/>
</dbReference>
<dbReference type="InterPro" id="IPR053469">
    <property type="entry name" value="Cell_env_sensor_kinase"/>
</dbReference>
<dbReference type="InterPro" id="IPR003660">
    <property type="entry name" value="HAMP_dom"/>
</dbReference>
<dbReference type="InterPro" id="IPR036890">
    <property type="entry name" value="HATPase_C_sf"/>
</dbReference>
<dbReference type="InterPro" id="IPR005467">
    <property type="entry name" value="His_kinase_dom"/>
</dbReference>
<dbReference type="InterPro" id="IPR003661">
    <property type="entry name" value="HisK_dim/P_dom"/>
</dbReference>
<dbReference type="InterPro" id="IPR036097">
    <property type="entry name" value="HisK_dim/P_sf"/>
</dbReference>
<dbReference type="NCBIfam" id="NF041732">
    <property type="entry name" value="hist_kin_CseC"/>
    <property type="match status" value="1"/>
</dbReference>
<dbReference type="PANTHER" id="PTHR44936">
    <property type="entry name" value="SENSOR PROTEIN CREC"/>
    <property type="match status" value="1"/>
</dbReference>
<dbReference type="PANTHER" id="PTHR44936:SF9">
    <property type="entry name" value="SENSOR PROTEIN CREC"/>
    <property type="match status" value="1"/>
</dbReference>
<dbReference type="Pfam" id="PF00672">
    <property type="entry name" value="HAMP"/>
    <property type="match status" value="1"/>
</dbReference>
<dbReference type="Pfam" id="PF02518">
    <property type="entry name" value="HATPase_c"/>
    <property type="match status" value="1"/>
</dbReference>
<dbReference type="Pfam" id="PF00512">
    <property type="entry name" value="HisKA"/>
    <property type="match status" value="1"/>
</dbReference>
<dbReference type="SMART" id="SM00304">
    <property type="entry name" value="HAMP"/>
    <property type="match status" value="1"/>
</dbReference>
<dbReference type="SMART" id="SM00387">
    <property type="entry name" value="HATPase_c"/>
    <property type="match status" value="1"/>
</dbReference>
<dbReference type="SMART" id="SM00388">
    <property type="entry name" value="HisKA"/>
    <property type="match status" value="1"/>
</dbReference>
<dbReference type="SUPFAM" id="SSF55874">
    <property type="entry name" value="ATPase domain of HSP90 chaperone/DNA topoisomerase II/histidine kinase"/>
    <property type="match status" value="1"/>
</dbReference>
<dbReference type="SUPFAM" id="SSF47384">
    <property type="entry name" value="Homodimeric domain of signal transducing histidine kinase"/>
    <property type="match status" value="1"/>
</dbReference>
<dbReference type="PROSITE" id="PS50885">
    <property type="entry name" value="HAMP"/>
    <property type="match status" value="1"/>
</dbReference>
<dbReference type="PROSITE" id="PS50109">
    <property type="entry name" value="HIS_KIN"/>
    <property type="match status" value="1"/>
</dbReference>
<keyword id="KW-0067">ATP-binding</keyword>
<keyword id="KW-1003">Cell membrane</keyword>
<keyword id="KW-0418">Kinase</keyword>
<keyword id="KW-0472">Membrane</keyword>
<keyword id="KW-0547">Nucleotide-binding</keyword>
<keyword id="KW-0597">Phosphoprotein</keyword>
<keyword id="KW-1185">Reference proteome</keyword>
<keyword id="KW-0808">Transferase</keyword>
<keyword id="KW-0812">Transmembrane</keyword>
<keyword id="KW-1133">Transmembrane helix</keyword>
<keyword id="KW-0902">Two-component regulatory system</keyword>
<gene>
    <name type="primary">cseC</name>
    <name type="ordered locus">SAV_4703</name>
</gene>
<feature type="chain" id="PRO_0000314482" description="Sensor protein CseC">
    <location>
        <begin position="1"/>
        <end position="487"/>
    </location>
</feature>
<feature type="transmembrane region" description="Helical" evidence="1">
    <location>
        <begin position="63"/>
        <end position="83"/>
    </location>
</feature>
<feature type="transmembrane region" description="Helical" evidence="1">
    <location>
        <begin position="185"/>
        <end position="205"/>
    </location>
</feature>
<feature type="domain" description="HAMP" evidence="2">
    <location>
        <begin position="206"/>
        <end position="262"/>
    </location>
</feature>
<feature type="domain" description="Histidine kinase" evidence="3">
    <location>
        <begin position="270"/>
        <end position="472"/>
    </location>
</feature>
<feature type="region of interest" description="Disordered" evidence="4">
    <location>
        <begin position="1"/>
        <end position="41"/>
    </location>
</feature>
<feature type="compositionally biased region" description="Low complexity" evidence="4">
    <location>
        <begin position="1"/>
        <end position="11"/>
    </location>
</feature>
<feature type="modified residue" description="Phosphohistidine; by autocatalysis" evidence="3">
    <location>
        <position position="273"/>
    </location>
</feature>
<accession>Q82EB2</accession>
<comment type="catalytic activity">
    <reaction>
        <text>ATP + protein L-histidine = ADP + protein N-phospho-L-histidine.</text>
        <dbReference type="EC" id="2.7.13.3"/>
    </reaction>
</comment>
<comment type="subcellular location">
    <subcellularLocation>
        <location evidence="5">Cell membrane</location>
        <topology evidence="5">Multi-pass membrane protein</topology>
    </subcellularLocation>
</comment>
<proteinExistence type="inferred from homology"/>
<organism>
    <name type="scientific">Streptomyces avermitilis (strain ATCC 31267 / DSM 46492 / JCM 5070 / NBRC 14893 / NCIMB 12804 / NRRL 8165 / MA-4680)</name>
    <dbReference type="NCBI Taxonomy" id="227882"/>
    <lineage>
        <taxon>Bacteria</taxon>
        <taxon>Bacillati</taxon>
        <taxon>Actinomycetota</taxon>
        <taxon>Actinomycetes</taxon>
        <taxon>Kitasatosporales</taxon>
        <taxon>Streptomycetaceae</taxon>
        <taxon>Streptomyces</taxon>
    </lineage>
</organism>
<evidence type="ECO:0000255" key="1"/>
<evidence type="ECO:0000255" key="2">
    <source>
        <dbReference type="PROSITE-ProRule" id="PRU00102"/>
    </source>
</evidence>
<evidence type="ECO:0000255" key="3">
    <source>
        <dbReference type="PROSITE-ProRule" id="PRU00107"/>
    </source>
</evidence>
<evidence type="ECO:0000256" key="4">
    <source>
        <dbReference type="SAM" id="MobiDB-lite"/>
    </source>
</evidence>
<evidence type="ECO:0000305" key="5"/>
<protein>
    <recommendedName>
        <fullName>Sensor protein CseC</fullName>
        <ecNumber>2.7.13.3</ecNumber>
    </recommendedName>
</protein>
<reference key="1">
    <citation type="journal article" date="2001" name="Proc. Natl. Acad. Sci. U.S.A.">
        <title>Genome sequence of an industrial microorganism Streptomyces avermitilis: deducing the ability of producing secondary metabolites.</title>
        <authorList>
            <person name="Omura S."/>
            <person name="Ikeda H."/>
            <person name="Ishikawa J."/>
            <person name="Hanamoto A."/>
            <person name="Takahashi C."/>
            <person name="Shinose M."/>
            <person name="Takahashi Y."/>
            <person name="Horikawa H."/>
            <person name="Nakazawa H."/>
            <person name="Osonoe T."/>
            <person name="Kikuchi H."/>
            <person name="Shiba T."/>
            <person name="Sakaki Y."/>
            <person name="Hattori M."/>
        </authorList>
    </citation>
    <scope>NUCLEOTIDE SEQUENCE [LARGE SCALE GENOMIC DNA]</scope>
    <source>
        <strain>ATCC 31267 / DSM 46492 / JCM 5070 / NBRC 14893 / NCIMB 12804 / NRRL 8165 / MA-4680</strain>
    </source>
</reference>
<reference key="2">
    <citation type="journal article" date="2003" name="Nat. Biotechnol.">
        <title>Complete genome sequence and comparative analysis of the industrial microorganism Streptomyces avermitilis.</title>
        <authorList>
            <person name="Ikeda H."/>
            <person name="Ishikawa J."/>
            <person name="Hanamoto A."/>
            <person name="Shinose M."/>
            <person name="Kikuchi H."/>
            <person name="Shiba T."/>
            <person name="Sakaki Y."/>
            <person name="Hattori M."/>
            <person name="Omura S."/>
        </authorList>
    </citation>
    <scope>NUCLEOTIDE SEQUENCE [LARGE SCALE GENOMIC DNA]</scope>
    <source>
        <strain>ATCC 31267 / DSM 46492 / JCM 5070 / NBRC 14893 / NCIMB 12804 / NRRL 8165 / MA-4680</strain>
    </source>
</reference>